<name>Y1053_METJA</name>
<dbReference type="EMBL" id="L77117">
    <property type="protein sequence ID" value="AAB99060.1"/>
    <property type="molecule type" value="Genomic_DNA"/>
</dbReference>
<dbReference type="PIR" id="D64431">
    <property type="entry name" value="D64431"/>
</dbReference>
<dbReference type="RefSeq" id="WP_010870566.1">
    <property type="nucleotide sequence ID" value="NC_000909.1"/>
</dbReference>
<dbReference type="SMR" id="Q58453"/>
<dbReference type="STRING" id="243232.MJ_1053"/>
<dbReference type="PaxDb" id="243232-MJ_1053"/>
<dbReference type="EnsemblBacteria" id="AAB99060">
    <property type="protein sequence ID" value="AAB99060"/>
    <property type="gene ID" value="MJ_1053"/>
</dbReference>
<dbReference type="GeneID" id="1451950"/>
<dbReference type="KEGG" id="mja:MJ_1053"/>
<dbReference type="eggNOG" id="arCOG00921">
    <property type="taxonomic scope" value="Archaea"/>
</dbReference>
<dbReference type="HOGENOM" id="CLU_109226_0_0_2"/>
<dbReference type="InParanoid" id="Q58453"/>
<dbReference type="OrthoDB" id="26894at2157"/>
<dbReference type="PhylomeDB" id="Q58453"/>
<dbReference type="Proteomes" id="UP000000805">
    <property type="component" value="Chromosome"/>
</dbReference>
<dbReference type="Gene3D" id="1.10.10.60">
    <property type="entry name" value="Homeodomain-like"/>
    <property type="match status" value="1"/>
</dbReference>
<dbReference type="InterPro" id="IPR022285">
    <property type="entry name" value="CHP03879_regulat_dom_put"/>
</dbReference>
<dbReference type="NCBIfam" id="TIGR03879">
    <property type="entry name" value="near_KaiC_dom"/>
    <property type="match status" value="1"/>
</dbReference>
<dbReference type="PANTHER" id="PTHR40727:SF1">
    <property type="entry name" value="BACTERIO-OPSIN ACTIVATOR"/>
    <property type="match status" value="1"/>
</dbReference>
<dbReference type="PANTHER" id="PTHR40727">
    <property type="entry name" value="TRANSCRIPTION REGULATOR, ENCODED NEXT TO RECA SUPERFAMILY ATPASE-RELATED"/>
    <property type="match status" value="1"/>
</dbReference>
<feature type="chain" id="PRO_0000107153" description="Uncharacterized protein MJ1053">
    <location>
        <begin position="1"/>
        <end position="163"/>
    </location>
</feature>
<organism>
    <name type="scientific">Methanocaldococcus jannaschii (strain ATCC 43067 / DSM 2661 / JAL-1 / JCM 10045 / NBRC 100440)</name>
    <name type="common">Methanococcus jannaschii</name>
    <dbReference type="NCBI Taxonomy" id="243232"/>
    <lineage>
        <taxon>Archaea</taxon>
        <taxon>Methanobacteriati</taxon>
        <taxon>Methanobacteriota</taxon>
        <taxon>Methanomada group</taxon>
        <taxon>Methanococci</taxon>
        <taxon>Methanococcales</taxon>
        <taxon>Methanocaldococcaceae</taxon>
        <taxon>Methanocaldococcus</taxon>
    </lineage>
</organism>
<sequence length="163" mass="18789">MIPLVPTSKTEIDKLEHVLILGTLFRPEILELIKDPIEKVTWVDSLAIAAGALAREKAGYTIREIADELGRTEQTIRKHLKGETKAGKLVRETYEMMKRGELNIEEVEKFLEAVVRKEELEKITDIKKLEEEIEKLKKENEELAAKLEKVKEKLKEVLSELEK</sequence>
<keyword id="KW-1185">Reference proteome</keyword>
<protein>
    <recommendedName>
        <fullName>Uncharacterized protein MJ1053</fullName>
    </recommendedName>
</protein>
<proteinExistence type="predicted"/>
<reference key="1">
    <citation type="journal article" date="1996" name="Science">
        <title>Complete genome sequence of the methanogenic archaeon, Methanococcus jannaschii.</title>
        <authorList>
            <person name="Bult C.J."/>
            <person name="White O."/>
            <person name="Olsen G.J."/>
            <person name="Zhou L."/>
            <person name="Fleischmann R.D."/>
            <person name="Sutton G.G."/>
            <person name="Blake J.A."/>
            <person name="FitzGerald L.M."/>
            <person name="Clayton R.A."/>
            <person name="Gocayne J.D."/>
            <person name="Kerlavage A.R."/>
            <person name="Dougherty B.A."/>
            <person name="Tomb J.-F."/>
            <person name="Adams M.D."/>
            <person name="Reich C.I."/>
            <person name="Overbeek R."/>
            <person name="Kirkness E.F."/>
            <person name="Weinstock K.G."/>
            <person name="Merrick J.M."/>
            <person name="Glodek A."/>
            <person name="Scott J.L."/>
            <person name="Geoghagen N.S.M."/>
            <person name="Weidman J.F."/>
            <person name="Fuhrmann J.L."/>
            <person name="Nguyen D."/>
            <person name="Utterback T.R."/>
            <person name="Kelley J.M."/>
            <person name="Peterson J.D."/>
            <person name="Sadow P.W."/>
            <person name="Hanna M.C."/>
            <person name="Cotton M.D."/>
            <person name="Roberts K.M."/>
            <person name="Hurst M.A."/>
            <person name="Kaine B.P."/>
            <person name="Borodovsky M."/>
            <person name="Klenk H.-P."/>
            <person name="Fraser C.M."/>
            <person name="Smith H.O."/>
            <person name="Woese C.R."/>
            <person name="Venter J.C."/>
        </authorList>
    </citation>
    <scope>NUCLEOTIDE SEQUENCE [LARGE SCALE GENOMIC DNA]</scope>
    <source>
        <strain>ATCC 43067 / DSM 2661 / JAL-1 / JCM 10045 / NBRC 100440</strain>
    </source>
</reference>
<accession>Q58453</accession>
<gene>
    <name type="ordered locus">MJ1053</name>
</gene>